<keyword id="KW-0072">Autophagy</keyword>
<keyword id="KW-0472">Membrane</keyword>
<keyword id="KW-0496">Mitochondrion</keyword>
<keyword id="KW-1000">Mitochondrion outer membrane</keyword>
<keyword id="KW-1185">Reference proteome</keyword>
<keyword id="KW-0812">Transmembrane</keyword>
<keyword id="KW-1133">Transmembrane helix</keyword>
<keyword id="KW-0926">Vacuole</keyword>
<gene>
    <name type="primary">ATG32</name>
    <name type="ordered locus">ZYRO0G06666g</name>
</gene>
<proteinExistence type="inferred from homology"/>
<protein>
    <recommendedName>
        <fullName>Autophagy-related protein 32</fullName>
    </recommendedName>
</protein>
<name>ATG32_ZYGRC</name>
<organism>
    <name type="scientific">Zygosaccharomyces rouxii (strain ATCC 2623 / CBS 732 / NBRC 1130 / NCYC 568 / NRRL Y-229)</name>
    <dbReference type="NCBI Taxonomy" id="559307"/>
    <lineage>
        <taxon>Eukaryota</taxon>
        <taxon>Fungi</taxon>
        <taxon>Dikarya</taxon>
        <taxon>Ascomycota</taxon>
        <taxon>Saccharomycotina</taxon>
        <taxon>Saccharomycetes</taxon>
        <taxon>Saccharomycetales</taxon>
        <taxon>Saccharomycetaceae</taxon>
        <taxon>Zygosaccharomyces</taxon>
    </lineage>
</organism>
<reference key="1">
    <citation type="journal article" date="2009" name="Genome Res.">
        <title>Comparative genomics of protoploid Saccharomycetaceae.</title>
        <authorList>
            <consortium name="The Genolevures Consortium"/>
            <person name="Souciet J.-L."/>
            <person name="Dujon B."/>
            <person name="Gaillardin C."/>
            <person name="Johnston M."/>
            <person name="Baret P.V."/>
            <person name="Cliften P."/>
            <person name="Sherman D.J."/>
            <person name="Weissenbach J."/>
            <person name="Westhof E."/>
            <person name="Wincker P."/>
            <person name="Jubin C."/>
            <person name="Poulain J."/>
            <person name="Barbe V."/>
            <person name="Segurens B."/>
            <person name="Artiguenave F."/>
            <person name="Anthouard V."/>
            <person name="Vacherie B."/>
            <person name="Val M.-E."/>
            <person name="Fulton R.S."/>
            <person name="Minx P."/>
            <person name="Wilson R."/>
            <person name="Durrens P."/>
            <person name="Jean G."/>
            <person name="Marck C."/>
            <person name="Martin T."/>
            <person name="Nikolski M."/>
            <person name="Rolland T."/>
            <person name="Seret M.-L."/>
            <person name="Casaregola S."/>
            <person name="Despons L."/>
            <person name="Fairhead C."/>
            <person name="Fischer G."/>
            <person name="Lafontaine I."/>
            <person name="Leh V."/>
            <person name="Lemaire M."/>
            <person name="de Montigny J."/>
            <person name="Neuveglise C."/>
            <person name="Thierry A."/>
            <person name="Blanc-Lenfle I."/>
            <person name="Bleykasten C."/>
            <person name="Diffels J."/>
            <person name="Fritsch E."/>
            <person name="Frangeul L."/>
            <person name="Goeffon A."/>
            <person name="Jauniaux N."/>
            <person name="Kachouri-Lafond R."/>
            <person name="Payen C."/>
            <person name="Potier S."/>
            <person name="Pribylova L."/>
            <person name="Ozanne C."/>
            <person name="Richard G.-F."/>
            <person name="Sacerdot C."/>
            <person name="Straub M.-L."/>
            <person name="Talla E."/>
        </authorList>
    </citation>
    <scope>NUCLEOTIDE SEQUENCE [LARGE SCALE GENOMIC DNA]</scope>
    <source>
        <strain>ATCC 2623 / CBS 732 / BCRC 21506 / NBRC 1130 / NCYC 568 / NRRL Y-229</strain>
    </source>
</reference>
<sequence>MTSTEGTGGGDGKGISGFSDIERRSILDPHLSVLELLRRPSDTRPHEALKGEVSDIVGNCAGTTGTGNGSISQSWQTIHRNDSCLSVVPERCPSQATAAGILSSSDTSEDEPDAVNSPSAVHQQLHATPPQKHTKSLEDYRSLNVGIPLVLPEDSNNINNNNKNGSTTGSNGEEDDNDTITKSLNSSSNSFIMPKLSLSQKTQKFRILVLGRPGLKFYHSIPKKYQHMFELPRSHDPAEFKQYTGILVVFQELKEMVSLLNRVCQCNPNRPVIPVCQSGQRQQVRNLLESLLKNRLVSLLYPPVVVNNQPDLLGMFRFLQELSKTVSDNSDMDAEEPNNGSKRLKRSLQRKKKKFIETSAERNGRPHKKRHNNEKVNRWVLWGVSLTLGVGVGYCISHLVSSTWISLTTNPLGPVDPESVSKDLFVFDRQELKLGEMDMDSDHPFGHALFLFKQALKQWNLAVKQFLGRHLSCMERIGPANCLEWPTSDEHTNRVLALGYVML</sequence>
<dbReference type="EMBL" id="CU928179">
    <property type="protein sequence ID" value="CAR29352.1"/>
    <property type="molecule type" value="Genomic_DNA"/>
</dbReference>
<dbReference type="RefSeq" id="XP_002498285.1">
    <property type="nucleotide sequence ID" value="XM_002498240.1"/>
</dbReference>
<dbReference type="SMR" id="C5DZR8"/>
<dbReference type="FunCoup" id="C5DZR8">
    <property type="interactions" value="72"/>
</dbReference>
<dbReference type="STRING" id="559307.C5DZR8"/>
<dbReference type="GeneID" id="8206085"/>
<dbReference type="KEGG" id="zro:ZYRO0G06666g"/>
<dbReference type="HOGENOM" id="CLU_039418_0_0_1"/>
<dbReference type="InParanoid" id="C5DZR8"/>
<dbReference type="Proteomes" id="UP000008536">
    <property type="component" value="Chromosome G"/>
</dbReference>
<dbReference type="GO" id="GO:0005741">
    <property type="term" value="C:mitochondrial outer membrane"/>
    <property type="evidence" value="ECO:0007669"/>
    <property type="project" value="UniProtKB-SubCell"/>
</dbReference>
<dbReference type="GO" id="GO:0034045">
    <property type="term" value="C:phagophore assembly site membrane"/>
    <property type="evidence" value="ECO:0007669"/>
    <property type="project" value="UniProtKB-SubCell"/>
</dbReference>
<dbReference type="GO" id="GO:0005774">
    <property type="term" value="C:vacuolar membrane"/>
    <property type="evidence" value="ECO:0007669"/>
    <property type="project" value="UniProtKB-SubCell"/>
</dbReference>
<dbReference type="GO" id="GO:0006914">
    <property type="term" value="P:autophagy"/>
    <property type="evidence" value="ECO:0007669"/>
    <property type="project" value="UniProtKB-KW"/>
</dbReference>
<dbReference type="CDD" id="cd19929">
    <property type="entry name" value="psREC_Atg32"/>
    <property type="match status" value="1"/>
</dbReference>
<evidence type="ECO:0000250" key="1"/>
<evidence type="ECO:0000255" key="2"/>
<evidence type="ECO:0000256" key="3">
    <source>
        <dbReference type="SAM" id="MobiDB-lite"/>
    </source>
</evidence>
<evidence type="ECO:0000305" key="4"/>
<comment type="function">
    <text evidence="1">Mitophagy-specific receptor that recruits the autophagic machinery to mitochondria and regulates selective degradation of mitochondria. Mitophagy contributes to regulate mitochondrial quantity and quality by eliminating the mitochondria to a basal level to fulfill cellular energy requirements and preventing excess ROS production. Recruits ATG11 to the surface of mitochondria. Also promotes autophagy-dependent peroxisome degradation (By similarity).</text>
</comment>
<comment type="subcellular location">
    <subcellularLocation>
        <location evidence="1">Mitochondrion outer membrane</location>
        <topology evidence="1">Single-pass membrane protein</topology>
    </subcellularLocation>
    <subcellularLocation>
        <location evidence="1">Vacuole membrane</location>
        <topology evidence="1">Single-pass membrane protein</topology>
    </subcellularLocation>
    <subcellularLocation>
        <location evidence="1">Preautophagosomal structure membrane</location>
        <topology evidence="1">Single-pass membrane protein</topology>
    </subcellularLocation>
    <text evidence="1">Is recruited to the preautophagosomal structure during mitophagy and imported into the vacuole along with mitochondria during starvation.</text>
</comment>
<comment type="similarity">
    <text evidence="4">Belongs to the ATG32 family.</text>
</comment>
<feature type="chain" id="PRO_0000399765" description="Autophagy-related protein 32">
    <location>
        <begin position="1"/>
        <end position="503"/>
    </location>
</feature>
<feature type="transmembrane region" description="Helical" evidence="2">
    <location>
        <begin position="380"/>
        <end position="396"/>
    </location>
</feature>
<feature type="region of interest" description="Disordered" evidence="3">
    <location>
        <begin position="98"/>
        <end position="138"/>
    </location>
</feature>
<feature type="region of interest" description="Disordered" evidence="3">
    <location>
        <begin position="151"/>
        <end position="186"/>
    </location>
</feature>
<feature type="region of interest" description="Disordered" evidence="3">
    <location>
        <begin position="328"/>
        <end position="370"/>
    </location>
</feature>
<feature type="compositionally biased region" description="Polar residues" evidence="3">
    <location>
        <begin position="116"/>
        <end position="126"/>
    </location>
</feature>
<feature type="compositionally biased region" description="Low complexity" evidence="3">
    <location>
        <begin position="155"/>
        <end position="171"/>
    </location>
</feature>
<feature type="compositionally biased region" description="Basic residues" evidence="3">
    <location>
        <begin position="342"/>
        <end position="354"/>
    </location>
</feature>
<feature type="compositionally biased region" description="Basic and acidic residues" evidence="3">
    <location>
        <begin position="355"/>
        <end position="364"/>
    </location>
</feature>
<accession>C5DZR8</accession>